<sequence>MLRTSIASSRQVLSSPICPNPSVQWLHTSRARRVNAAASRRYYAVARKPNAGVRSSSTPNAAATPELSQKATNSTSTKPPGPNDPDVRSPASPSTGSTLHPETVSKPPQSPAVQGQTSPGSSVQPPEHEPSPPPPRPPPAPKTGLLRKLLYLFLTTGLAYAGGVWYSLRSDNFYDFFTEYIPYGEEAVLYLEERDFRSRFPSIARQINRRVSAPRDEGAQVMIPGRSGLSWKVAEEQQEASDVTKQGQHISATDANELTEETKVAEKAKEDVKSKPVAKKAEAAEPKSSPKVVEPHPAKAEENTSLEAPRQPVVPAAAAIEHLGLDNEDEPVVQDLVKVFNDIITVISADESASKFSVPIAKAKEELEKIGDRIVALKNDAQESAKEEIRNAQAALDKSAAELVRHINEVRAQDAAEFREEFESEREKISKSYQEKVTTELQRAHEVAEQRLRNELVEQAIELNRKFLADVKTLVENEREGRLSKLAELTANVAELERLTAGWSDVIDINLRTQQLQVAVDSVRTTLENSEVPRPFIRELAAVKELASNDEVVAAAIASISPTAYQRGIPSPAQLVDRFRRVASEVRKASLLPENAGITSHAASLVLSKVMLKKQGTPVGNDVESILTRTENLLEEGNFDEAAREMNSLQGWAKLLSKDWLADVRRVLEVKQALEVIETEARLRCLQVE</sequence>
<feature type="transit peptide" description="Mitochondrion" evidence="2">
    <location>
        <begin position="1"/>
        <end position="43"/>
    </location>
</feature>
<feature type="chain" id="PRO_0000406641" description="MICOS complex subunit MIC60">
    <location>
        <begin position="44"/>
        <end position="689"/>
    </location>
</feature>
<feature type="topological domain" description="Mitochondrial matrix" evidence="2">
    <location>
        <begin position="56"/>
        <end position="148"/>
    </location>
</feature>
<feature type="transmembrane region" description="Helical" evidence="2">
    <location>
        <begin position="149"/>
        <end position="168"/>
    </location>
</feature>
<feature type="topological domain" description="Mitochondrial intermembrane" evidence="2">
    <location>
        <begin position="169"/>
        <end position="689"/>
    </location>
</feature>
<feature type="region of interest" description="Disordered" evidence="3">
    <location>
        <begin position="49"/>
        <end position="142"/>
    </location>
</feature>
<feature type="region of interest" description="Disordered" evidence="3">
    <location>
        <begin position="234"/>
        <end position="308"/>
    </location>
</feature>
<feature type="coiled-coil region" evidence="2">
    <location>
        <begin position="360"/>
        <end position="505"/>
    </location>
</feature>
<feature type="compositionally biased region" description="Polar residues" evidence="3">
    <location>
        <begin position="53"/>
        <end position="78"/>
    </location>
</feature>
<feature type="compositionally biased region" description="Polar residues" evidence="3">
    <location>
        <begin position="91"/>
        <end position="100"/>
    </location>
</feature>
<feature type="compositionally biased region" description="Polar residues" evidence="3">
    <location>
        <begin position="111"/>
        <end position="124"/>
    </location>
</feature>
<feature type="compositionally biased region" description="Pro residues" evidence="3">
    <location>
        <begin position="131"/>
        <end position="141"/>
    </location>
</feature>
<feature type="compositionally biased region" description="Polar residues" evidence="3">
    <location>
        <begin position="240"/>
        <end position="256"/>
    </location>
</feature>
<feature type="compositionally biased region" description="Basic and acidic residues" evidence="3">
    <location>
        <begin position="260"/>
        <end position="285"/>
    </location>
</feature>
<feature type="compositionally biased region" description="Basic and acidic residues" evidence="3">
    <location>
        <begin position="293"/>
        <end position="302"/>
    </location>
</feature>
<keyword id="KW-0175">Coiled coil</keyword>
<keyword id="KW-0472">Membrane</keyword>
<keyword id="KW-0496">Mitochondrion</keyword>
<keyword id="KW-0999">Mitochondrion inner membrane</keyword>
<keyword id="KW-1185">Reference proteome</keyword>
<keyword id="KW-0809">Transit peptide</keyword>
<keyword id="KW-0812">Transmembrane</keyword>
<keyword id="KW-1133">Transmembrane helix</keyword>
<dbReference type="EMBL" id="GG657450">
    <property type="protein sequence ID" value="OAT06117.1"/>
    <property type="molecule type" value="Genomic_DNA"/>
</dbReference>
<dbReference type="SMR" id="C5JIS0"/>
<dbReference type="STRING" id="559298.C5JIS0"/>
<dbReference type="VEuPathDB" id="FungiDB:BDBG_02399"/>
<dbReference type="HOGENOM" id="CLU_008024_1_2_1"/>
<dbReference type="OrthoDB" id="10261039at2759"/>
<dbReference type="Proteomes" id="UP000002038">
    <property type="component" value="Unassembled WGS sequence"/>
</dbReference>
<dbReference type="GO" id="GO:0061617">
    <property type="term" value="C:MICOS complex"/>
    <property type="evidence" value="ECO:0007669"/>
    <property type="project" value="TreeGrafter"/>
</dbReference>
<dbReference type="GO" id="GO:0042407">
    <property type="term" value="P:cristae formation"/>
    <property type="evidence" value="ECO:0007669"/>
    <property type="project" value="TreeGrafter"/>
</dbReference>
<dbReference type="InterPro" id="IPR019133">
    <property type="entry name" value="MIC60"/>
</dbReference>
<dbReference type="PANTHER" id="PTHR15415:SF7">
    <property type="entry name" value="MICOS COMPLEX SUBUNIT MIC60"/>
    <property type="match status" value="1"/>
</dbReference>
<dbReference type="PANTHER" id="PTHR15415">
    <property type="entry name" value="MITOFILIN"/>
    <property type="match status" value="1"/>
</dbReference>
<dbReference type="Pfam" id="PF09731">
    <property type="entry name" value="Mitofilin"/>
    <property type="match status" value="2"/>
</dbReference>
<gene>
    <name type="primary">MIC60</name>
    <name type="synonym">FCJ1</name>
    <name type="ORF">BDBG_02399</name>
</gene>
<proteinExistence type="inferred from homology"/>
<reference key="1">
    <citation type="journal article" date="2015" name="PLoS Genet.">
        <title>The dynamic genome and transcriptome of the human fungal pathogen Blastomyces and close relative Emmonsia.</title>
        <authorList>
            <person name="Munoz J.F."/>
            <person name="Gauthier G.M."/>
            <person name="Desjardins C.A."/>
            <person name="Gallo J.E."/>
            <person name="Holder J."/>
            <person name="Sullivan T.D."/>
            <person name="Marty A.J."/>
            <person name="Carmen J.C."/>
            <person name="Chen Z."/>
            <person name="Ding L."/>
            <person name="Gujja S."/>
            <person name="Magrini V."/>
            <person name="Misas E."/>
            <person name="Mitreva M."/>
            <person name="Priest M."/>
            <person name="Saif S."/>
            <person name="Whiston E.A."/>
            <person name="Young S."/>
            <person name="Zeng Q."/>
            <person name="Goldman W.E."/>
            <person name="Mardis E.R."/>
            <person name="Taylor J.W."/>
            <person name="McEwen J.G."/>
            <person name="Clay O.K."/>
            <person name="Klein B.S."/>
            <person name="Cuomo C.A."/>
        </authorList>
    </citation>
    <scope>NUCLEOTIDE SEQUENCE [LARGE SCALE GENOMIC DNA]</scope>
    <source>
        <strain>SLH14081</strain>
    </source>
</reference>
<evidence type="ECO:0000250" key="1"/>
<evidence type="ECO:0000255" key="2"/>
<evidence type="ECO:0000256" key="3">
    <source>
        <dbReference type="SAM" id="MobiDB-lite"/>
    </source>
</evidence>
<evidence type="ECO:0000305" key="4"/>
<organism>
    <name type="scientific">Blastomyces gilchristii (strain SLH14081)</name>
    <name type="common">Blastomyces dermatitidis</name>
    <dbReference type="NCBI Taxonomy" id="559298"/>
    <lineage>
        <taxon>Eukaryota</taxon>
        <taxon>Fungi</taxon>
        <taxon>Dikarya</taxon>
        <taxon>Ascomycota</taxon>
        <taxon>Pezizomycotina</taxon>
        <taxon>Eurotiomycetes</taxon>
        <taxon>Eurotiomycetidae</taxon>
        <taxon>Onygenales</taxon>
        <taxon>Ajellomycetaceae</taxon>
        <taxon>Blastomyces</taxon>
    </lineage>
</organism>
<name>MIC60_BLAGS</name>
<accession>C5JIS0</accession>
<accession>A0A179UG41</accession>
<protein>
    <recommendedName>
        <fullName>MICOS complex subunit MIC60</fullName>
    </recommendedName>
    <alternativeName>
        <fullName>Formation of crista junctions protein 1</fullName>
    </alternativeName>
    <alternativeName>
        <fullName>Mitofilin</fullName>
    </alternativeName>
</protein>
<comment type="function">
    <text evidence="1">Component of the MICOS complex, a large protein complex of the mitochondrial inner membrane that plays crucial roles in the maintenance of crista junctions, inner membrane architecture, and formation of contact sites to the outer membrane. Plays a role in keeping cristae membranes connected to the inner boundary membrane. Also promotes protein import via the mitochondrial intermembrane space assembly (MIA) pathway (By similarity).</text>
</comment>
<comment type="subunit">
    <text evidence="1">Component of the mitochondrial contact site and cristae organizing system (MICOS) complex.</text>
</comment>
<comment type="subcellular location">
    <subcellularLocation>
        <location evidence="1">Mitochondrion inner membrane</location>
        <topology evidence="1">Single-pass membrane protein</topology>
    </subcellularLocation>
</comment>
<comment type="similarity">
    <text evidence="4">Belongs to the MICOS complex subunit Mic60 family.</text>
</comment>